<feature type="chain" id="PRO_0000062570" description="Ribulose bisphosphate carboxylase large chain">
    <location>
        <begin position="1" status="less than"/>
        <end position="441"/>
    </location>
</feature>
<feature type="active site" description="Proton acceptor" evidence="1">
    <location>
        <position position="141"/>
    </location>
</feature>
<feature type="active site" description="Proton acceptor" evidence="1">
    <location>
        <position position="260"/>
    </location>
</feature>
<feature type="binding site" description="in homodimeric partner" evidence="1">
    <location>
        <position position="89"/>
    </location>
    <ligand>
        <name>substrate</name>
    </ligand>
</feature>
<feature type="binding site" evidence="1">
    <location>
        <position position="139"/>
    </location>
    <ligand>
        <name>substrate</name>
    </ligand>
</feature>
<feature type="binding site" evidence="1">
    <location>
        <position position="143"/>
    </location>
    <ligand>
        <name>substrate</name>
    </ligand>
</feature>
<feature type="binding site" description="via carbamate group" evidence="1">
    <location>
        <position position="167"/>
    </location>
    <ligand>
        <name>Mg(2+)</name>
        <dbReference type="ChEBI" id="CHEBI:18420"/>
    </ligand>
</feature>
<feature type="binding site" evidence="1">
    <location>
        <position position="169"/>
    </location>
    <ligand>
        <name>Mg(2+)</name>
        <dbReference type="ChEBI" id="CHEBI:18420"/>
    </ligand>
</feature>
<feature type="binding site" evidence="1">
    <location>
        <position position="170"/>
    </location>
    <ligand>
        <name>Mg(2+)</name>
        <dbReference type="ChEBI" id="CHEBI:18420"/>
    </ligand>
</feature>
<feature type="binding site" evidence="1">
    <location>
        <position position="261"/>
    </location>
    <ligand>
        <name>substrate</name>
    </ligand>
</feature>
<feature type="binding site" evidence="1">
    <location>
        <position position="293"/>
    </location>
    <ligand>
        <name>substrate</name>
    </ligand>
</feature>
<feature type="binding site" evidence="1">
    <location>
        <position position="345"/>
    </location>
    <ligand>
        <name>substrate</name>
    </ligand>
</feature>
<feature type="site" description="Transition state stabilizer" evidence="1">
    <location>
        <position position="300"/>
    </location>
</feature>
<feature type="modified residue" description="N6-carboxylysine" evidence="1">
    <location>
        <position position="167"/>
    </location>
</feature>
<feature type="disulfide bond" description="Interchain; in linked form" evidence="1">
    <location>
        <position position="213"/>
    </location>
</feature>
<feature type="non-terminal residue">
    <location>
        <position position="1"/>
    </location>
</feature>
<keyword id="KW-0113">Calvin cycle</keyword>
<keyword id="KW-0120">Carbon dioxide fixation</keyword>
<keyword id="KW-0150">Chloroplast</keyword>
<keyword id="KW-1015">Disulfide bond</keyword>
<keyword id="KW-0456">Lyase</keyword>
<keyword id="KW-0460">Magnesium</keyword>
<keyword id="KW-0479">Metal-binding</keyword>
<keyword id="KW-0503">Monooxygenase</keyword>
<keyword id="KW-0560">Oxidoreductase</keyword>
<keyword id="KW-0601">Photorespiration</keyword>
<keyword id="KW-0602">Photosynthesis</keyword>
<keyword id="KW-0934">Plastid</keyword>
<organism>
    <name type="scientific">Polemonium reptans</name>
    <name type="common">Greek valerian</name>
    <name type="synonym">Jacob's ladder</name>
    <dbReference type="NCBI Taxonomy" id="13640"/>
    <lineage>
        <taxon>Eukaryota</taxon>
        <taxon>Viridiplantae</taxon>
        <taxon>Streptophyta</taxon>
        <taxon>Embryophyta</taxon>
        <taxon>Tracheophyta</taxon>
        <taxon>Spermatophyta</taxon>
        <taxon>Magnoliopsida</taxon>
        <taxon>eudicotyledons</taxon>
        <taxon>Gunneridae</taxon>
        <taxon>Pentapetalae</taxon>
        <taxon>asterids</taxon>
        <taxon>Ericales</taxon>
        <taxon>Polemoniaceae</taxon>
        <taxon>Polemonium</taxon>
    </lineage>
</organism>
<name>RBL_POLRE</name>
<accession>Q05992</accession>
<reference key="1">
    <citation type="journal article" date="1992" name="Ann. Mo. Bot. Gard.">
        <title>Monophyly of the Asteridae and identification of their major lineages inferred from DNA sequences of rbcL.</title>
        <authorList>
            <person name="Olmstead R.G."/>
            <person name="Michaels H.J."/>
            <person name="Scott K.M."/>
            <person name="Palmer J.D."/>
        </authorList>
        <dbReference type="AGRICOLA" id="IND93014998"/>
    </citation>
    <scope>NUCLEOTIDE SEQUENCE [GENOMIC DNA]</scope>
</reference>
<sequence>DILAAFRVTPQPGVPPEEAGAAVAAESSTGTWTTVWTDGLTSLDRYKGRCYHIEPVAGEESQFIAYVAYPLDLFEEGSVTNMFTSIVGNVFGFKALRALRLEDLRIPPAYVKTFQGPPHGIQVERDKLNKYGRPLLGCTIKPKLGLSAKNYGRAVYECLRGGLDFTKDDENVNSQPFMRWRDRFLFCAEALYKAQAETGEIKGHYLNATAGTCEEMIKRAVFARELGVPIVMHDYLTGGFTANTSLAHYCRDNGLLLHIHRAMHAVIDRQKNHGIHFRVLAKALRMSGGDHIHSGTVVGKLEGEREITLGFVDLLRDDFIEKDRSRGIYFTQDWVSLPGVLPVASGGIHVWHMPALTEIFGDDSVLQFGGGTLGHPWGNAPGAVANRVALEACVQARNEGRDLAREGNEIIREASKWSPELAAACEVWKEIKFEFEAMDTL</sequence>
<dbReference type="EC" id="4.1.1.39" evidence="1"/>
<dbReference type="EMBL" id="L11687">
    <property type="protein sequence ID" value="AAA84558.1"/>
    <property type="molecule type" value="Genomic_DNA"/>
</dbReference>
<dbReference type="SMR" id="Q05992"/>
<dbReference type="GO" id="GO:0009507">
    <property type="term" value="C:chloroplast"/>
    <property type="evidence" value="ECO:0007669"/>
    <property type="project" value="UniProtKB-SubCell"/>
</dbReference>
<dbReference type="GO" id="GO:0000287">
    <property type="term" value="F:magnesium ion binding"/>
    <property type="evidence" value="ECO:0007669"/>
    <property type="project" value="InterPro"/>
</dbReference>
<dbReference type="GO" id="GO:0004497">
    <property type="term" value="F:monooxygenase activity"/>
    <property type="evidence" value="ECO:0007669"/>
    <property type="project" value="UniProtKB-KW"/>
</dbReference>
<dbReference type="GO" id="GO:0016984">
    <property type="term" value="F:ribulose-bisphosphate carboxylase activity"/>
    <property type="evidence" value="ECO:0007669"/>
    <property type="project" value="UniProtKB-EC"/>
</dbReference>
<dbReference type="GO" id="GO:0009853">
    <property type="term" value="P:photorespiration"/>
    <property type="evidence" value="ECO:0007669"/>
    <property type="project" value="UniProtKB-KW"/>
</dbReference>
<dbReference type="GO" id="GO:0019253">
    <property type="term" value="P:reductive pentose-phosphate cycle"/>
    <property type="evidence" value="ECO:0007669"/>
    <property type="project" value="UniProtKB-KW"/>
</dbReference>
<dbReference type="CDD" id="cd08212">
    <property type="entry name" value="RuBisCO_large_I"/>
    <property type="match status" value="1"/>
</dbReference>
<dbReference type="FunFam" id="3.20.20.110:FF:000001">
    <property type="entry name" value="Ribulose bisphosphate carboxylase large chain"/>
    <property type="match status" value="1"/>
</dbReference>
<dbReference type="Gene3D" id="3.20.20.110">
    <property type="entry name" value="Ribulose bisphosphate carboxylase, large subunit, C-terminal domain"/>
    <property type="match status" value="1"/>
</dbReference>
<dbReference type="Gene3D" id="3.30.70.150">
    <property type="entry name" value="RuBisCO large subunit, N-terminal domain"/>
    <property type="match status" value="1"/>
</dbReference>
<dbReference type="HAMAP" id="MF_01338">
    <property type="entry name" value="RuBisCO_L_type1"/>
    <property type="match status" value="1"/>
</dbReference>
<dbReference type="InterPro" id="IPR033966">
    <property type="entry name" value="RuBisCO"/>
</dbReference>
<dbReference type="InterPro" id="IPR020878">
    <property type="entry name" value="RuBisCo_large_chain_AS"/>
</dbReference>
<dbReference type="InterPro" id="IPR000685">
    <property type="entry name" value="RuBisCO_lsu_C"/>
</dbReference>
<dbReference type="InterPro" id="IPR036376">
    <property type="entry name" value="RuBisCO_lsu_C_sf"/>
</dbReference>
<dbReference type="InterPro" id="IPR017443">
    <property type="entry name" value="RuBisCO_lsu_fd_N"/>
</dbReference>
<dbReference type="InterPro" id="IPR036422">
    <property type="entry name" value="RuBisCO_lsu_N_sf"/>
</dbReference>
<dbReference type="InterPro" id="IPR020888">
    <property type="entry name" value="RuBisCO_lsuI"/>
</dbReference>
<dbReference type="NCBIfam" id="NF003252">
    <property type="entry name" value="PRK04208.1"/>
    <property type="match status" value="1"/>
</dbReference>
<dbReference type="PANTHER" id="PTHR42704">
    <property type="entry name" value="RIBULOSE BISPHOSPHATE CARBOXYLASE"/>
    <property type="match status" value="1"/>
</dbReference>
<dbReference type="PANTHER" id="PTHR42704:SF16">
    <property type="entry name" value="RIBULOSE BISPHOSPHATE CARBOXYLASE LARGE CHAIN"/>
    <property type="match status" value="1"/>
</dbReference>
<dbReference type="Pfam" id="PF00016">
    <property type="entry name" value="RuBisCO_large"/>
    <property type="match status" value="1"/>
</dbReference>
<dbReference type="Pfam" id="PF02788">
    <property type="entry name" value="RuBisCO_large_N"/>
    <property type="match status" value="1"/>
</dbReference>
<dbReference type="SFLD" id="SFLDG01052">
    <property type="entry name" value="RuBisCO"/>
    <property type="match status" value="1"/>
</dbReference>
<dbReference type="SFLD" id="SFLDS00014">
    <property type="entry name" value="RuBisCO"/>
    <property type="match status" value="1"/>
</dbReference>
<dbReference type="SFLD" id="SFLDG00301">
    <property type="entry name" value="RuBisCO-like_proteins"/>
    <property type="match status" value="1"/>
</dbReference>
<dbReference type="SUPFAM" id="SSF51649">
    <property type="entry name" value="RuBisCo, C-terminal domain"/>
    <property type="match status" value="1"/>
</dbReference>
<dbReference type="SUPFAM" id="SSF54966">
    <property type="entry name" value="RuBisCO, large subunit, small (N-terminal) domain"/>
    <property type="match status" value="1"/>
</dbReference>
<dbReference type="PROSITE" id="PS00157">
    <property type="entry name" value="RUBISCO_LARGE"/>
    <property type="match status" value="1"/>
</dbReference>
<proteinExistence type="inferred from homology"/>
<protein>
    <recommendedName>
        <fullName evidence="1">Ribulose bisphosphate carboxylase large chain</fullName>
        <shortName evidence="1">RuBisCO large subunit</shortName>
        <ecNumber evidence="1">4.1.1.39</ecNumber>
    </recommendedName>
</protein>
<comment type="function">
    <text evidence="1">RuBisCO catalyzes two reactions: the carboxylation of D-ribulose 1,5-bisphosphate, the primary event in carbon dioxide fixation, as well as the oxidative fragmentation of the pentose substrate in the photorespiration process. Both reactions occur simultaneously and in competition at the same active site.</text>
</comment>
<comment type="catalytic activity">
    <reaction evidence="1">
        <text>2 (2R)-3-phosphoglycerate + 2 H(+) = D-ribulose 1,5-bisphosphate + CO2 + H2O</text>
        <dbReference type="Rhea" id="RHEA:23124"/>
        <dbReference type="ChEBI" id="CHEBI:15377"/>
        <dbReference type="ChEBI" id="CHEBI:15378"/>
        <dbReference type="ChEBI" id="CHEBI:16526"/>
        <dbReference type="ChEBI" id="CHEBI:57870"/>
        <dbReference type="ChEBI" id="CHEBI:58272"/>
        <dbReference type="EC" id="4.1.1.39"/>
    </reaction>
</comment>
<comment type="catalytic activity">
    <reaction evidence="1">
        <text>D-ribulose 1,5-bisphosphate + O2 = 2-phosphoglycolate + (2R)-3-phosphoglycerate + 2 H(+)</text>
        <dbReference type="Rhea" id="RHEA:36631"/>
        <dbReference type="ChEBI" id="CHEBI:15378"/>
        <dbReference type="ChEBI" id="CHEBI:15379"/>
        <dbReference type="ChEBI" id="CHEBI:57870"/>
        <dbReference type="ChEBI" id="CHEBI:58033"/>
        <dbReference type="ChEBI" id="CHEBI:58272"/>
    </reaction>
</comment>
<comment type="cofactor">
    <cofactor evidence="1">
        <name>Mg(2+)</name>
        <dbReference type="ChEBI" id="CHEBI:18420"/>
    </cofactor>
    <text evidence="1">Binds 1 Mg(2+) ion per subunit.</text>
</comment>
<comment type="subunit">
    <text evidence="1">Heterohexadecamer of 8 large chains and 8 small chains; disulfide-linked. The disulfide link is formed within the large subunit homodimers.</text>
</comment>
<comment type="subcellular location">
    <subcellularLocation>
        <location>Plastid</location>
        <location>Chloroplast</location>
    </subcellularLocation>
</comment>
<comment type="PTM">
    <text evidence="1">The disulfide bond which can form in the large chain dimeric partners within the hexadecamer appears to be associated with oxidative stress and protein turnover.</text>
</comment>
<comment type="miscellaneous">
    <text evidence="1">The basic functional RuBisCO is composed of a large chain homodimer in a 'head-to-tail' conformation. In form I RuBisCO this homodimer is arranged in a barrel-like tetramer with the small subunits forming a tetrameric 'cap' on each end of the 'barrel'.</text>
</comment>
<comment type="similarity">
    <text evidence="1">Belongs to the RuBisCO large chain family. Type I subfamily.</text>
</comment>
<geneLocation type="chloroplast"/>
<gene>
    <name evidence="1" type="primary">rbcL</name>
</gene>
<evidence type="ECO:0000255" key="1">
    <source>
        <dbReference type="HAMAP-Rule" id="MF_01338"/>
    </source>
</evidence>